<proteinExistence type="evidence at transcript level"/>
<sequence>MQMSYAIRCAFYQLLLAALMLVAMLQLLYLSLLSGLHGQEEQDQYFEFFPPSPRSVDQVKAQLRTALASGGVLDASGDYRVYRGLLKTTMDPNDVILATHASVDNLLHLSGLLERWEGPLSVSVFAATKEEAQLATVLTYALSSHCPDMRARVAMHLVCPSRYEAAVPDPREPGEFALLRSCQEVFDKLARVAQPGVNYALGTNVSYPNNLLRNLAREGANYALVIDVDMVPSEGLWRSLREMLDQSKQWAGTALVVPAFEIRRARRMPMNKNELLQLYQVGEVRPFYYGLCTPCQAPTNYSRWVNLPEETLLRPAYVVPWQDPWEPFYVAGGKVPTFDERFRQYGFNRISQACELHVAGFDFEVLNEGFLVHKGFKEVLKFHPQKEAENQHNKILYRQFKQELKAKYPDSPRHC</sequence>
<reference key="1">
    <citation type="journal article" date="2005" name="BMC Genomics">
        <title>Characterization of 954 bovine full-CDS cDNA sequences.</title>
        <authorList>
            <person name="Harhay G.P."/>
            <person name="Sonstegard T.S."/>
            <person name="Keele J.W."/>
            <person name="Heaton M.P."/>
            <person name="Clawson M.L."/>
            <person name="Snelling W.M."/>
            <person name="Wiedmann R.T."/>
            <person name="Van Tassell C.P."/>
            <person name="Smith T.P.L."/>
        </authorList>
    </citation>
    <scope>NUCLEOTIDE SEQUENCE [LARGE SCALE MRNA]</scope>
</reference>
<reference key="2">
    <citation type="submission" date="2005-09" db="EMBL/GenBank/DDBJ databases">
        <authorList>
            <consortium name="NIH - Mammalian Gene Collection (MGC) project"/>
        </authorList>
    </citation>
    <scope>NUCLEOTIDE SEQUENCE [LARGE SCALE MRNA]</scope>
    <source>
        <strain>Hereford</strain>
        <tissue>Kidney</tissue>
    </source>
</reference>
<protein>
    <recommendedName>
        <fullName evidence="1">Beta-1,4-glucuronyltransferase 1</fullName>
        <ecNumber evidence="1">2.4.1.-</ecNumber>
    </recommendedName>
    <alternativeName>
        <fullName>I-beta-1,3-N-acetylglucosaminyltransferase</fullName>
        <shortName>iGnT</shortName>
    </alternativeName>
    <alternativeName>
        <fullName>N-acetyllactosaminide beta-1,3-N-acetylglucosaminyltransferase</fullName>
    </alternativeName>
    <alternativeName>
        <fullName>Poly-N-acetyllactosamine extension enzyme</fullName>
    </alternativeName>
    <alternativeName>
        <fullName>UDP-GlcNAc:betaGal beta-1,3-N-acetylglucosaminyltransferase 1</fullName>
    </alternativeName>
</protein>
<keyword id="KW-0325">Glycoprotein</keyword>
<keyword id="KW-0328">Glycosyltransferase</keyword>
<keyword id="KW-0333">Golgi apparatus</keyword>
<keyword id="KW-0464">Manganese</keyword>
<keyword id="KW-0472">Membrane</keyword>
<keyword id="KW-0479">Metal-binding</keyword>
<keyword id="KW-1185">Reference proteome</keyword>
<keyword id="KW-0735">Signal-anchor</keyword>
<keyword id="KW-0808">Transferase</keyword>
<keyword id="KW-0812">Transmembrane</keyword>
<keyword id="KW-1133">Transmembrane helix</keyword>
<comment type="function">
    <text evidence="1 2">Beta-1,4-glucuronyltransferase involved in O-mannosylation of alpha-dystroglycan (DAG1). Transfers a glucuronic acid (GlcA) residue onto a xylose (Xyl) acceptor to produce the glucuronyl-beta-1,4-xylose-beta disaccharide primer, which is further elongated by LARGE1, during synthesis of phosphorylated O-mannosyl glycan. Phosphorylated O-mannosyl glycan is a carbohydrate structure present in alpha-dystroglycan (DAG1), which is required for binding laminin G-like domain-containing extracellular proteins with high affinity. Required for axon guidance; via its function in O-mannosylation of alpha-dystroglycan (DAG1).</text>
</comment>
<comment type="catalytic activity">
    <reaction evidence="1">
        <text>3-O-[beta-D-Xyl-(1-&gt;4)-Rib-ol-P-Rib-ol-P-3-beta-D-GalNAc-(1-&gt;3)-beta-D-GlcNAc-(1-&gt;4)-(O-6-P-alpha-D-Man)]-Thr-[protein] + UDP-alpha-D-glucuronate = 3-O-[beta-D-GlcA-(1-&gt;3)-beta-D-Xyl-(1-&gt;4)-Rib-ol-P-Rib-ol-P-3-beta-D-GalNAc-(1-&gt;3)-beta-D-GlcNAc-(1-&gt;4)-(O-6-P-alpha-D-Man)]-Thr-[protein] + UDP + H(+)</text>
        <dbReference type="Rhea" id="RHEA:46860"/>
        <dbReference type="Rhea" id="RHEA-COMP:15023"/>
        <dbReference type="Rhea" id="RHEA-COMP:17482"/>
        <dbReference type="ChEBI" id="CHEBI:15378"/>
        <dbReference type="ChEBI" id="CHEBI:58052"/>
        <dbReference type="ChEBI" id="CHEBI:58223"/>
        <dbReference type="ChEBI" id="CHEBI:142405"/>
        <dbReference type="ChEBI" id="CHEBI:177336"/>
    </reaction>
</comment>
<comment type="cofactor">
    <cofactor evidence="1">
        <name>Mn(2+)</name>
        <dbReference type="ChEBI" id="CHEBI:29035"/>
    </cofactor>
</comment>
<comment type="pathway">
    <text evidence="1 2">Protein modification; protein glycosylation.</text>
</comment>
<comment type="subunit">
    <text evidence="1">Interacts with LARGE1 and LARGE2.</text>
</comment>
<comment type="subcellular location">
    <subcellularLocation>
        <location evidence="1 2">Golgi apparatus membrane</location>
        <topology>Single-pass type II membrane protein</topology>
    </subcellularLocation>
    <text evidence="1">Localizes near the trans-Golgi apparatus.</text>
</comment>
<comment type="similarity">
    <text evidence="4">Belongs to the glycosyltransferase 49 family.</text>
</comment>
<comment type="sequence caution" evidence="4">
    <conflict type="frameshift">
        <sequence resource="EMBL-CDS" id="AAX46482"/>
    </conflict>
</comment>
<dbReference type="EC" id="2.4.1.-" evidence="1"/>
<dbReference type="EMBL" id="BT020768">
    <property type="protein sequence ID" value="AAX08785.1"/>
    <property type="molecule type" value="mRNA"/>
</dbReference>
<dbReference type="EMBL" id="BT021635">
    <property type="protein sequence ID" value="AAX46482.1"/>
    <property type="status" value="ALT_FRAME"/>
    <property type="molecule type" value="mRNA"/>
</dbReference>
<dbReference type="EMBL" id="BC105206">
    <property type="protein sequence ID" value="AAI05207.1"/>
    <property type="molecule type" value="mRNA"/>
</dbReference>
<dbReference type="RefSeq" id="NP_001029980.1">
    <property type="nucleotide sequence ID" value="NM_001034808.1"/>
</dbReference>
<dbReference type="SMR" id="Q5EA01"/>
<dbReference type="FunCoup" id="Q5EA01">
    <property type="interactions" value="539"/>
</dbReference>
<dbReference type="STRING" id="9913.ENSBTAP00000030011"/>
<dbReference type="CAZy" id="GT49">
    <property type="family name" value="Glycosyltransferase Family 49"/>
</dbReference>
<dbReference type="GlyCosmos" id="Q5EA01">
    <property type="glycosylation" value="2 sites, No reported glycans"/>
</dbReference>
<dbReference type="GlyGen" id="Q5EA01">
    <property type="glycosylation" value="2 sites"/>
</dbReference>
<dbReference type="PaxDb" id="9913-ENSBTAP00000030011"/>
<dbReference type="Ensembl" id="ENSBTAT00000030023.3">
    <property type="protein sequence ID" value="ENSBTAP00000030011.2"/>
    <property type="gene ID" value="ENSBTAG00000022238.5"/>
</dbReference>
<dbReference type="GeneID" id="618055"/>
<dbReference type="KEGG" id="bta:618055"/>
<dbReference type="CTD" id="11041"/>
<dbReference type="VEuPathDB" id="HostDB:ENSBTAG00000022238"/>
<dbReference type="VGNC" id="VGNC:26395">
    <property type="gene designation" value="B4GAT1"/>
</dbReference>
<dbReference type="eggNOG" id="KOG3765">
    <property type="taxonomic scope" value="Eukaryota"/>
</dbReference>
<dbReference type="GeneTree" id="ENSGT00940000157679"/>
<dbReference type="HOGENOM" id="CLU_019238_5_0_1"/>
<dbReference type="InParanoid" id="Q5EA01"/>
<dbReference type="OMA" id="SGQYRIY"/>
<dbReference type="OrthoDB" id="9974378at2759"/>
<dbReference type="TreeFam" id="TF319168"/>
<dbReference type="Reactome" id="R-BTA-2022854">
    <property type="pathway name" value="Keratan sulfate biosynthesis"/>
</dbReference>
<dbReference type="Reactome" id="R-BTA-5173105">
    <property type="pathway name" value="O-linked glycosylation"/>
</dbReference>
<dbReference type="UniPathway" id="UPA00378"/>
<dbReference type="Proteomes" id="UP000009136">
    <property type="component" value="Chromosome 29"/>
</dbReference>
<dbReference type="Bgee" id="ENSBTAG00000022238">
    <property type="expression patterns" value="Expressed in Ammon's horn and 102 other cell types or tissues"/>
</dbReference>
<dbReference type="GO" id="GO:0005794">
    <property type="term" value="C:Golgi apparatus"/>
    <property type="evidence" value="ECO:0000250"/>
    <property type="project" value="UniProtKB"/>
</dbReference>
<dbReference type="GO" id="GO:0000139">
    <property type="term" value="C:Golgi membrane"/>
    <property type="evidence" value="ECO:0007669"/>
    <property type="project" value="UniProtKB-SubCell"/>
</dbReference>
<dbReference type="GO" id="GO:0015020">
    <property type="term" value="F:glucuronosyltransferase activity"/>
    <property type="evidence" value="ECO:0000250"/>
    <property type="project" value="UniProtKB"/>
</dbReference>
<dbReference type="GO" id="GO:0046872">
    <property type="term" value="F:metal ion binding"/>
    <property type="evidence" value="ECO:0007669"/>
    <property type="project" value="UniProtKB-KW"/>
</dbReference>
<dbReference type="GO" id="GO:0007411">
    <property type="term" value="P:axon guidance"/>
    <property type="evidence" value="ECO:0007669"/>
    <property type="project" value="Ensembl"/>
</dbReference>
<dbReference type="GO" id="GO:0035269">
    <property type="term" value="P:protein O-linked mannosylation"/>
    <property type="evidence" value="ECO:0000250"/>
    <property type="project" value="UniProtKB"/>
</dbReference>
<dbReference type="InterPro" id="IPR043189">
    <property type="entry name" value="B4GAT1"/>
</dbReference>
<dbReference type="PANTHER" id="PTHR46420">
    <property type="entry name" value="BETA-1,4-GLUCURONYLTRANSFERASE 1"/>
    <property type="match status" value="1"/>
</dbReference>
<dbReference type="PANTHER" id="PTHR46420:SF1">
    <property type="entry name" value="BETA-1,4-GLUCURONYLTRANSFERASE 1"/>
    <property type="match status" value="1"/>
</dbReference>
<dbReference type="Pfam" id="PF13896">
    <property type="entry name" value="Glyco_transf_49"/>
    <property type="match status" value="1"/>
</dbReference>
<evidence type="ECO:0000250" key="1">
    <source>
        <dbReference type="UniProtKB" id="O43505"/>
    </source>
</evidence>
<evidence type="ECO:0000250" key="2">
    <source>
        <dbReference type="UniProtKB" id="Q8BWP8"/>
    </source>
</evidence>
<evidence type="ECO:0000255" key="3"/>
<evidence type="ECO:0000305" key="4"/>
<accession>Q5EA01</accession>
<accession>Q3MHK2</accession>
<accession>Q58DG2</accession>
<organism>
    <name type="scientific">Bos taurus</name>
    <name type="common">Bovine</name>
    <dbReference type="NCBI Taxonomy" id="9913"/>
    <lineage>
        <taxon>Eukaryota</taxon>
        <taxon>Metazoa</taxon>
        <taxon>Chordata</taxon>
        <taxon>Craniata</taxon>
        <taxon>Vertebrata</taxon>
        <taxon>Euteleostomi</taxon>
        <taxon>Mammalia</taxon>
        <taxon>Eutheria</taxon>
        <taxon>Laurasiatheria</taxon>
        <taxon>Artiodactyla</taxon>
        <taxon>Ruminantia</taxon>
        <taxon>Pecora</taxon>
        <taxon>Bovidae</taxon>
        <taxon>Bovinae</taxon>
        <taxon>Bos</taxon>
    </lineage>
</organism>
<name>B4GA1_BOVIN</name>
<gene>
    <name evidence="1" type="primary">B4GAT1</name>
    <name type="synonym">B3GNT1</name>
    <name type="synonym">B3GNT6</name>
</gene>
<feature type="chain" id="PRO_0000080554" description="Beta-1,4-glucuronyltransferase 1">
    <location>
        <begin position="1"/>
        <end position="415"/>
    </location>
</feature>
<feature type="topological domain" description="Cytoplasmic" evidence="3">
    <location>
        <begin position="1"/>
        <end position="8"/>
    </location>
</feature>
<feature type="transmembrane region" description="Helical; Signal-anchor for type II membrane protein" evidence="3">
    <location>
        <begin position="9"/>
        <end position="36"/>
    </location>
</feature>
<feature type="topological domain" description="Lumenal" evidence="3">
    <location>
        <begin position="37"/>
        <end position="415"/>
    </location>
</feature>
<feature type="binding site" evidence="1">
    <location>
        <position position="227"/>
    </location>
    <ligand>
        <name>Mn(2+)</name>
        <dbReference type="ChEBI" id="CHEBI:29035"/>
    </ligand>
</feature>
<feature type="binding site" evidence="1">
    <location>
        <position position="229"/>
    </location>
    <ligand>
        <name>Mn(2+)</name>
        <dbReference type="ChEBI" id="CHEBI:29035"/>
    </ligand>
</feature>
<feature type="glycosylation site" description="N-linked (GlcNAc...) asparagine" evidence="3">
    <location>
        <position position="204"/>
    </location>
</feature>
<feature type="glycosylation site" description="N-linked (GlcNAc...) asparagine" evidence="3">
    <location>
        <position position="300"/>
    </location>
</feature>
<feature type="sequence conflict" description="In Ref. 1; AAI05207." evidence="4" ref="1">
    <original>L</original>
    <variation>P</variation>
    <location>
        <position position="178"/>
    </location>
</feature>